<dbReference type="EMBL" id="AFNW01000283">
    <property type="protein sequence ID" value="EKJ71675.1"/>
    <property type="molecule type" value="Genomic_DNA"/>
</dbReference>
<dbReference type="RefSeq" id="XP_009259514.1">
    <property type="nucleotide sequence ID" value="XM_009261239.1"/>
</dbReference>
<dbReference type="SMR" id="K3VZ28"/>
<dbReference type="EnsemblFungi" id="EKJ71675">
    <property type="protein sequence ID" value="EKJ71675"/>
    <property type="gene ID" value="FPSE_08121"/>
</dbReference>
<dbReference type="GeneID" id="20366739"/>
<dbReference type="KEGG" id="fpu:FPSE_08121"/>
<dbReference type="eggNOG" id="ENOG502RHAD">
    <property type="taxonomic scope" value="Eukaryota"/>
</dbReference>
<dbReference type="HOGENOM" id="CLU_006329_1_4_1"/>
<dbReference type="OrthoDB" id="4451586at2759"/>
<dbReference type="Proteomes" id="UP000007978">
    <property type="component" value="Chromosome 2"/>
</dbReference>
<dbReference type="GO" id="GO:0005634">
    <property type="term" value="C:nucleus"/>
    <property type="evidence" value="ECO:0007669"/>
    <property type="project" value="UniProtKB-SubCell"/>
</dbReference>
<dbReference type="GO" id="GO:0003677">
    <property type="term" value="F:DNA binding"/>
    <property type="evidence" value="ECO:0007669"/>
    <property type="project" value="InterPro"/>
</dbReference>
<dbReference type="GO" id="GO:0000981">
    <property type="term" value="F:DNA-binding transcription factor activity, RNA polymerase II-specific"/>
    <property type="evidence" value="ECO:0007669"/>
    <property type="project" value="InterPro"/>
</dbReference>
<dbReference type="GO" id="GO:0008270">
    <property type="term" value="F:zinc ion binding"/>
    <property type="evidence" value="ECO:0007669"/>
    <property type="project" value="InterPro"/>
</dbReference>
<dbReference type="GO" id="GO:0006351">
    <property type="term" value="P:DNA-templated transcription"/>
    <property type="evidence" value="ECO:0007669"/>
    <property type="project" value="InterPro"/>
</dbReference>
<dbReference type="CDD" id="cd12148">
    <property type="entry name" value="fungal_TF_MHR"/>
    <property type="match status" value="1"/>
</dbReference>
<dbReference type="CDD" id="cd00067">
    <property type="entry name" value="GAL4"/>
    <property type="match status" value="1"/>
</dbReference>
<dbReference type="Gene3D" id="4.10.240.10">
    <property type="entry name" value="Zn(2)-C6 fungal-type DNA-binding domain"/>
    <property type="match status" value="1"/>
</dbReference>
<dbReference type="InterPro" id="IPR052761">
    <property type="entry name" value="Fungal_Detox/Toxin_TFs"/>
</dbReference>
<dbReference type="InterPro" id="IPR007219">
    <property type="entry name" value="Transcription_factor_dom_fun"/>
</dbReference>
<dbReference type="InterPro" id="IPR036864">
    <property type="entry name" value="Zn2-C6_fun-type_DNA-bd_sf"/>
</dbReference>
<dbReference type="InterPro" id="IPR001138">
    <property type="entry name" value="Zn2Cys6_DnaBD"/>
</dbReference>
<dbReference type="PANTHER" id="PTHR47425">
    <property type="entry name" value="FARB-RELATED"/>
    <property type="match status" value="1"/>
</dbReference>
<dbReference type="PANTHER" id="PTHR47425:SF3">
    <property type="entry name" value="ZN(II)2CYS6 TRANSCRIPTION FACTOR (EUROFUNG)"/>
    <property type="match status" value="1"/>
</dbReference>
<dbReference type="Pfam" id="PF04082">
    <property type="entry name" value="Fungal_trans"/>
    <property type="match status" value="1"/>
</dbReference>
<dbReference type="Pfam" id="PF00172">
    <property type="entry name" value="Zn_clus"/>
    <property type="match status" value="1"/>
</dbReference>
<dbReference type="SMART" id="SM00906">
    <property type="entry name" value="Fungal_trans"/>
    <property type="match status" value="1"/>
</dbReference>
<dbReference type="SMART" id="SM00066">
    <property type="entry name" value="GAL4"/>
    <property type="match status" value="1"/>
</dbReference>
<dbReference type="SUPFAM" id="SSF57701">
    <property type="entry name" value="Zn2/Cys6 DNA-binding domain"/>
    <property type="match status" value="1"/>
</dbReference>
<dbReference type="PROSITE" id="PS00463">
    <property type="entry name" value="ZN2_CY6_FUNGAL_1"/>
    <property type="match status" value="1"/>
</dbReference>
<dbReference type="PROSITE" id="PS50048">
    <property type="entry name" value="ZN2_CY6_FUNGAL_2"/>
    <property type="match status" value="1"/>
</dbReference>
<name>FDB21_FUSPC</name>
<feature type="chain" id="PRO_0000454604" description="Transcription factor FPSE_08121">
    <location>
        <begin position="1"/>
        <end position="902"/>
    </location>
</feature>
<feature type="DNA-binding region" description="Zn(2)-C6 fungal-type" evidence="2">
    <location>
        <begin position="52"/>
        <end position="81"/>
    </location>
</feature>
<feature type="region of interest" description="Disordered" evidence="3">
    <location>
        <begin position="1"/>
        <end position="47"/>
    </location>
</feature>
<feature type="region of interest" description="Disordered" evidence="3">
    <location>
        <begin position="92"/>
        <end position="189"/>
    </location>
</feature>
<feature type="region of interest" description="Disordered" evidence="3">
    <location>
        <begin position="208"/>
        <end position="234"/>
    </location>
</feature>
<feature type="region of interest" description="Disordered" evidence="3">
    <location>
        <begin position="258"/>
        <end position="277"/>
    </location>
</feature>
<feature type="region of interest" description="Disordered" evidence="3">
    <location>
        <begin position="820"/>
        <end position="839"/>
    </location>
</feature>
<feature type="compositionally biased region" description="Low complexity" evidence="3">
    <location>
        <begin position="120"/>
        <end position="137"/>
    </location>
</feature>
<feature type="compositionally biased region" description="Acidic residues" evidence="3">
    <location>
        <begin position="168"/>
        <end position="177"/>
    </location>
</feature>
<feature type="compositionally biased region" description="Polar residues" evidence="3">
    <location>
        <begin position="178"/>
        <end position="187"/>
    </location>
</feature>
<feature type="compositionally biased region" description="Polar residues" evidence="3">
    <location>
        <begin position="220"/>
        <end position="234"/>
    </location>
</feature>
<feature type="compositionally biased region" description="Polar residues" evidence="3">
    <location>
        <begin position="262"/>
        <end position="277"/>
    </location>
</feature>
<feature type="compositionally biased region" description="Polar residues" evidence="3">
    <location>
        <begin position="826"/>
        <end position="839"/>
    </location>
</feature>
<proteinExistence type="evidence at transcript level"/>
<evidence type="ECO:0000250" key="1">
    <source>
        <dbReference type="UniProtKB" id="W7MLD5"/>
    </source>
</evidence>
<evidence type="ECO:0000255" key="2">
    <source>
        <dbReference type="PROSITE-ProRule" id="PRU00227"/>
    </source>
</evidence>
<evidence type="ECO:0000256" key="3">
    <source>
        <dbReference type="SAM" id="MobiDB-lite"/>
    </source>
</evidence>
<evidence type="ECO:0000269" key="4">
    <source>
    </source>
</evidence>
<evidence type="ECO:0000269" key="5">
    <source>
    </source>
</evidence>
<evidence type="ECO:0000303" key="6">
    <source>
    </source>
</evidence>
<keyword id="KW-0479">Metal-binding</keyword>
<keyword id="KW-0539">Nucleus</keyword>
<keyword id="KW-1185">Reference proteome</keyword>
<keyword id="KW-0862">Zinc</keyword>
<accession>K3VZ28</accession>
<gene>
    <name type="ORF">FPSE_08121</name>
</gene>
<comment type="function">
    <text evidence="1 4 5">Transcription factor; part of the Fusarium detoxification of benzoxazolinone cluster involved in the degradation of benzoxazolinones produced by the host plant (PubMed:25727347, PubMed:26828593). Maize, wheat, and rye produce the 2 benzoxazinone phytoanticipins 2,4-dihy-droxy-7-methoxy-1,4-benzoxazin-3-one (DIMBOA) and 2,4-dihydroxy-1,4-benzoxazin-3-one (DIBOA) that, due to their inherent instability once released, spontaneously degrade to the more stable corresponding benzoxazolinones, 6-methoxy-2-benzoxazolinone (MBOA) and 2-benzoxazolinone (BOA), respectively (By similarity). FPSE_08121 positively regulates the expression of the FBD cluster gene FPSE_08120 in response to 2-aminophenol (2-AP) treatment and contributes quantitatively to benzoxazolinone tolerance (PubMed:26828593).</text>
</comment>
<comment type="subcellular location">
    <subcellularLocation>
        <location evidence="2">Nucleus</location>
    </subcellularLocation>
</comment>
<comment type="induction">
    <text evidence="4 5">Expression is induced in response to 2-benzoxasolinone (BOA) exposure (PubMed:25727347). Expression is also induced in response to 6-methoxy-2-benzoxazolinone (MBOA) and 2-aminophenol (2-AP) treatment (PubMed:26828593).</text>
</comment>
<comment type="disruption phenotype">
    <text evidence="5">Reduces significantly the induction of the FBD cluster gene FPSE_08120 in response to 2-aminophenol (2-AP) treatment.</text>
</comment>
<reference key="1">
    <citation type="journal article" date="2012" name="PLoS Pathog.">
        <title>Comparative pathogenomics reveals horizontally acquired novel virulence genes in fungi infecting cereal hosts.</title>
        <authorList>
            <person name="Gardiner D.M."/>
            <person name="McDonald M.C."/>
            <person name="Covarelli L."/>
            <person name="Solomon P.S."/>
            <person name="Rusu A.G."/>
            <person name="Marshall M."/>
            <person name="Kazan K."/>
            <person name="Chakraborty S."/>
            <person name="McDonald B.A."/>
            <person name="Manners J.M."/>
        </authorList>
    </citation>
    <scope>NUCLEOTIDE SEQUENCE [LARGE SCALE GENOMIC DNA]</scope>
    <source>
        <strain>CS3096</strain>
    </source>
</reference>
<reference key="2">
    <citation type="journal article" date="2015" name="Mol. Plant Pathol.">
        <title>Degradation of the benzoxazolinone class of phytoalexins is important for virulence of Fusarium pseudograminearum towards wheat.</title>
        <authorList>
            <person name="Kettle A.J."/>
            <person name="Batley J."/>
            <person name="Benfield A.H."/>
            <person name="Manners J.M."/>
            <person name="Kazan K."/>
            <person name="Gardiner D.M."/>
        </authorList>
    </citation>
    <scope>FUNCTION</scope>
    <scope>INDUCTION</scope>
</reference>
<reference key="3">
    <citation type="journal article" date="2016" name="Fungal Genet. Biol.">
        <title>The Fdb3 transcription factor of the Fusarium Detoxification of Benzoxazolinone gene cluster is required for MBOA but not BOA degradation in Fusarium pseudograminearum.</title>
        <authorList>
            <person name="Kettle A.J."/>
            <person name="Carere J."/>
            <person name="Batley J."/>
            <person name="Manners J.M."/>
            <person name="Kazan K."/>
            <person name="Gardiner D.M."/>
        </authorList>
    </citation>
    <scope>FUNCTION</scope>
    <scope>INDUCTION</scope>
    <scope>DISRUPTION PHENOTYPE</scope>
</reference>
<protein>
    <recommendedName>
        <fullName evidence="6">Transcription factor FPSE_08121</fullName>
    </recommendedName>
    <alternativeName>
        <fullName evidence="6">Fusarium detoxification of benzoxazolinone cluster protein FPSE_08121</fullName>
        <shortName evidence="6">FDB cluster protein FPSE_08121</shortName>
    </alternativeName>
</protein>
<sequence>MVSPDNRPGTQGPSASAHAHDSRVPRKRPGSWDNNPSTAGNRAVKKRAVRACVSCRDRKVRCDVVNGGPPCTNCRLDDVDCVLKASNRGKHNPARYQARSRLSSNATAPRAPSPSDNINTDADTAAPGPAPGSASATVFRSDHSHGSVATGQPQERRGSQSVAHGDEETICDDDENENNSWHNQQEAEQTRIIHDSQVQPNDIVHETHCEQQPQPQPSQGAATRSTPSAQPANPQTSDYLVALAFQGFYALGWTEQDATEAPPSSSRMDNVSASANTPHADQNHLPLYISPHPSHLDKHDLEFLARKDCLTIPDNQLRDELIRIYVFVVYPFMPAIDLVDFLEPITGSSEVGTVSLLLFQAIMFASVTFIDMQLLQRYGFKNKRAARQVFFNRVKLLYSLGYEADRLTLVQSLLLMTYWYDSDSDEKHTWYWMGLALTTAHIEGLQRDLEEPQQMTKNGRLRRRIWWSCVIRDRLLGLGLRRPSRIQEDEFSVERLRLDDFDISLPPPPAVARLLAAPSYTGKDPVNRQRMANLCIDLSQLCFTIGRILHTQYTIASTPGAGSNYLRRAIVRPRSLKEQAHSFAKCDADLQEWFRSLAPESRYVPGARDGGAAAAQVENSTIRLHKILLYMKYLTAIGALHRPQVFYSGSDSIDPARKADSRRKLTEAAVAITKLAFDLQSNGQMCYAPTSSVPAFLSAALIHLLNIRSPDEETRNISIGRFCQCLDALHQLQSMYTAADEAVHIINNMTENAGFILPLLGIGNPMSKANGIAARNSRLFSAIGPSRVTTAYPSPAPATGNLDTSQEEMISAPIPGAGPTGVALTGQRSRQPSAGPNMTPSATPNLMSIWSAAGNIHSERDLPLPADLMAGIQLDLDAWYNIGDIIDPALMNFETGLDFLNS</sequence>
<organism>
    <name type="scientific">Fusarium pseudograminearum (strain CS3096)</name>
    <name type="common">Wheat and barley crown-rot fungus</name>
    <dbReference type="NCBI Taxonomy" id="1028729"/>
    <lineage>
        <taxon>Eukaryota</taxon>
        <taxon>Fungi</taxon>
        <taxon>Dikarya</taxon>
        <taxon>Ascomycota</taxon>
        <taxon>Pezizomycotina</taxon>
        <taxon>Sordariomycetes</taxon>
        <taxon>Hypocreomycetidae</taxon>
        <taxon>Hypocreales</taxon>
        <taxon>Nectriaceae</taxon>
        <taxon>Fusarium</taxon>
    </lineage>
</organism>